<gene>
    <name type="primary">ycf15-A</name>
    <name type="ordered locus">Poptr_cp067</name>
</gene>
<gene>
    <name type="primary">ycf15-B</name>
    <name type="ordered locus">Poptr_cp097</name>
</gene>
<protein>
    <recommendedName>
        <fullName>Putative uncharacterized protein ycf15</fullName>
    </recommendedName>
</protein>
<comment type="subcellular location">
    <subcellularLocation>
        <location>Plastid</location>
        <location>Chloroplast</location>
    </subcellularLocation>
</comment>
<comment type="similarity">
    <text evidence="1">Belongs to the ycf15 family.</text>
</comment>
<comment type="caution">
    <text evidence="1">Could be the product of a pseudogene.</text>
</comment>
<feature type="chain" id="PRO_0000360393" description="Putative uncharacterized protein ycf15">
    <location>
        <begin position="1"/>
        <end position="45"/>
    </location>
</feature>
<geneLocation type="chloroplast"/>
<keyword id="KW-0150">Chloroplast</keyword>
<keyword id="KW-0934">Plastid</keyword>
<keyword id="KW-1185">Reference proteome</keyword>
<reference key="1">
    <citation type="journal article" date="2006" name="Science">
        <title>The genome of black cottonwood, Populus trichocarpa (Torr. &amp; Gray).</title>
        <authorList>
            <person name="Tuskan G.A."/>
            <person name="Difazio S."/>
            <person name="Jansson S."/>
            <person name="Bohlmann J."/>
            <person name="Grigoriev I."/>
            <person name="Hellsten U."/>
            <person name="Putnam N."/>
            <person name="Ralph S."/>
            <person name="Rombauts S."/>
            <person name="Salamov A."/>
            <person name="Schein J."/>
            <person name="Sterck L."/>
            <person name="Aerts A."/>
            <person name="Bhalerao R.R."/>
            <person name="Bhalerao R.P."/>
            <person name="Blaudez D."/>
            <person name="Boerjan W."/>
            <person name="Brun A."/>
            <person name="Brunner A."/>
            <person name="Busov V."/>
            <person name="Campbell M."/>
            <person name="Carlson J."/>
            <person name="Chalot M."/>
            <person name="Chapman J."/>
            <person name="Chen G.-L."/>
            <person name="Cooper D."/>
            <person name="Coutinho P.M."/>
            <person name="Couturier J."/>
            <person name="Covert S."/>
            <person name="Cronk Q."/>
            <person name="Cunningham R."/>
            <person name="Davis J."/>
            <person name="Degroeve S."/>
            <person name="Dejardin A."/>
            <person name="dePamphilis C.W."/>
            <person name="Detter J."/>
            <person name="Dirks B."/>
            <person name="Dubchak I."/>
            <person name="Duplessis S."/>
            <person name="Ehlting J."/>
            <person name="Ellis B."/>
            <person name="Gendler K."/>
            <person name="Goodstein D."/>
            <person name="Gribskov M."/>
            <person name="Grimwood J."/>
            <person name="Groover A."/>
            <person name="Gunter L."/>
            <person name="Hamberger B."/>
            <person name="Heinze B."/>
            <person name="Helariutta Y."/>
            <person name="Henrissat B."/>
            <person name="Holligan D."/>
            <person name="Holt R."/>
            <person name="Huang W."/>
            <person name="Islam-Faridi N."/>
            <person name="Jones S."/>
            <person name="Jones-Rhoades M."/>
            <person name="Jorgensen R."/>
            <person name="Joshi C."/>
            <person name="Kangasjaervi J."/>
            <person name="Karlsson J."/>
            <person name="Kelleher C."/>
            <person name="Kirkpatrick R."/>
            <person name="Kirst M."/>
            <person name="Kohler A."/>
            <person name="Kalluri U."/>
            <person name="Larimer F."/>
            <person name="Leebens-Mack J."/>
            <person name="Leple J.-C."/>
            <person name="Locascio P."/>
            <person name="Lou Y."/>
            <person name="Lucas S."/>
            <person name="Martin F."/>
            <person name="Montanini B."/>
            <person name="Napoli C."/>
            <person name="Nelson D.R."/>
            <person name="Nelson C."/>
            <person name="Nieminen K."/>
            <person name="Nilsson O."/>
            <person name="Pereda V."/>
            <person name="Peter G."/>
            <person name="Philippe R."/>
            <person name="Pilate G."/>
            <person name="Poliakov A."/>
            <person name="Razumovskaya J."/>
            <person name="Richardson P."/>
            <person name="Rinaldi C."/>
            <person name="Ritland K."/>
            <person name="Rouze P."/>
            <person name="Ryaboy D."/>
            <person name="Schmutz J."/>
            <person name="Schrader J."/>
            <person name="Segerman B."/>
            <person name="Shin H."/>
            <person name="Siddiqui A."/>
            <person name="Sterky F."/>
            <person name="Terry A."/>
            <person name="Tsai C.-J."/>
            <person name="Uberbacher E."/>
            <person name="Unneberg P."/>
            <person name="Vahala J."/>
            <person name="Wall K."/>
            <person name="Wessler S."/>
            <person name="Yang G."/>
            <person name="Yin T."/>
            <person name="Douglas C."/>
            <person name="Marra M."/>
            <person name="Sandberg G."/>
            <person name="Van de Peer Y."/>
            <person name="Rokhsar D.S."/>
        </authorList>
    </citation>
    <scope>NUCLEOTIDE SEQUENCE [LARGE SCALE GENOMIC DNA]</scope>
    <source>
        <strain>cv. Nisqually</strain>
    </source>
</reference>
<sequence>MLLLKHGRIEILDQNTMYGWYELPKQEFLNSEQPERFLTTSKNFH</sequence>
<name>YCF15_POPTR</name>
<accession>A4GYV5</accession>
<dbReference type="EMBL" id="EF489041">
    <property type="protein sequence ID" value="ABO36750.1"/>
    <property type="molecule type" value="Genomic_DNA"/>
</dbReference>
<dbReference type="EMBL" id="EF489041">
    <property type="protein sequence ID" value="ABO36778.1"/>
    <property type="molecule type" value="Genomic_DNA"/>
</dbReference>
<dbReference type="STRING" id="3694.A4GYV5"/>
<dbReference type="InParanoid" id="A4GYV5"/>
<dbReference type="Proteomes" id="UP000006729">
    <property type="component" value="Chloroplast"/>
</dbReference>
<dbReference type="GO" id="GO:0009507">
    <property type="term" value="C:chloroplast"/>
    <property type="evidence" value="ECO:0007669"/>
    <property type="project" value="UniProtKB-SubCell"/>
</dbReference>
<dbReference type="InterPro" id="IPR019645">
    <property type="entry name" value="Uncharacterised_Ycf15"/>
</dbReference>
<dbReference type="Pfam" id="PF10705">
    <property type="entry name" value="Ycf15"/>
    <property type="match status" value="1"/>
</dbReference>
<proteinExistence type="uncertain"/>
<organism>
    <name type="scientific">Populus trichocarpa</name>
    <name type="common">Western balsam poplar</name>
    <name type="synonym">Populus balsamifera subsp. trichocarpa</name>
    <dbReference type="NCBI Taxonomy" id="3694"/>
    <lineage>
        <taxon>Eukaryota</taxon>
        <taxon>Viridiplantae</taxon>
        <taxon>Streptophyta</taxon>
        <taxon>Embryophyta</taxon>
        <taxon>Tracheophyta</taxon>
        <taxon>Spermatophyta</taxon>
        <taxon>Magnoliopsida</taxon>
        <taxon>eudicotyledons</taxon>
        <taxon>Gunneridae</taxon>
        <taxon>Pentapetalae</taxon>
        <taxon>rosids</taxon>
        <taxon>fabids</taxon>
        <taxon>Malpighiales</taxon>
        <taxon>Salicaceae</taxon>
        <taxon>Saliceae</taxon>
        <taxon>Populus</taxon>
    </lineage>
</organism>
<evidence type="ECO:0000305" key="1"/>